<accession>Q0BMI2</accession>
<feature type="chain" id="PRO_1000002061" description="SsrA-binding protein">
    <location>
        <begin position="1"/>
        <end position="157"/>
    </location>
</feature>
<feature type="region of interest" description="Disordered" evidence="2">
    <location>
        <begin position="132"/>
        <end position="157"/>
    </location>
</feature>
<feature type="compositionally biased region" description="Basic and acidic residues" evidence="2">
    <location>
        <begin position="135"/>
        <end position="157"/>
    </location>
</feature>
<organism>
    <name type="scientific">Francisella tularensis subsp. holarctica (strain OSU18)</name>
    <dbReference type="NCBI Taxonomy" id="393011"/>
    <lineage>
        <taxon>Bacteria</taxon>
        <taxon>Pseudomonadati</taxon>
        <taxon>Pseudomonadota</taxon>
        <taxon>Gammaproteobacteria</taxon>
        <taxon>Thiotrichales</taxon>
        <taxon>Francisellaceae</taxon>
        <taxon>Francisella</taxon>
    </lineage>
</organism>
<gene>
    <name evidence="1" type="primary">smpB</name>
    <name type="ordered locus">FTH_0762</name>
</gene>
<proteinExistence type="inferred from homology"/>
<protein>
    <recommendedName>
        <fullName evidence="1">SsrA-binding protein</fullName>
    </recommendedName>
    <alternativeName>
        <fullName evidence="1">Small protein B</fullName>
    </alternativeName>
</protein>
<dbReference type="EMBL" id="CP000437">
    <property type="protein sequence ID" value="ABI82702.1"/>
    <property type="molecule type" value="Genomic_DNA"/>
</dbReference>
<dbReference type="RefSeq" id="WP_003015283.1">
    <property type="nucleotide sequence ID" value="NC_017463.1"/>
</dbReference>
<dbReference type="SMR" id="Q0BMI2"/>
<dbReference type="KEGG" id="fth:FTH_0762"/>
<dbReference type="GO" id="GO:0005829">
    <property type="term" value="C:cytosol"/>
    <property type="evidence" value="ECO:0007669"/>
    <property type="project" value="TreeGrafter"/>
</dbReference>
<dbReference type="GO" id="GO:0003723">
    <property type="term" value="F:RNA binding"/>
    <property type="evidence" value="ECO:0007669"/>
    <property type="project" value="UniProtKB-UniRule"/>
</dbReference>
<dbReference type="GO" id="GO:0070929">
    <property type="term" value="P:trans-translation"/>
    <property type="evidence" value="ECO:0007669"/>
    <property type="project" value="UniProtKB-UniRule"/>
</dbReference>
<dbReference type="CDD" id="cd09294">
    <property type="entry name" value="SmpB"/>
    <property type="match status" value="1"/>
</dbReference>
<dbReference type="Gene3D" id="2.40.280.10">
    <property type="match status" value="1"/>
</dbReference>
<dbReference type="HAMAP" id="MF_00023">
    <property type="entry name" value="SmpB"/>
    <property type="match status" value="1"/>
</dbReference>
<dbReference type="InterPro" id="IPR023620">
    <property type="entry name" value="SmpB"/>
</dbReference>
<dbReference type="InterPro" id="IPR000037">
    <property type="entry name" value="SsrA-bd_prot"/>
</dbReference>
<dbReference type="InterPro" id="IPR020081">
    <property type="entry name" value="SsrA-bd_prot_CS"/>
</dbReference>
<dbReference type="NCBIfam" id="NF003843">
    <property type="entry name" value="PRK05422.1"/>
    <property type="match status" value="1"/>
</dbReference>
<dbReference type="NCBIfam" id="TIGR00086">
    <property type="entry name" value="smpB"/>
    <property type="match status" value="1"/>
</dbReference>
<dbReference type="PANTHER" id="PTHR30308:SF2">
    <property type="entry name" value="SSRA-BINDING PROTEIN"/>
    <property type="match status" value="1"/>
</dbReference>
<dbReference type="PANTHER" id="PTHR30308">
    <property type="entry name" value="TMRNA-BINDING COMPONENT OF TRANS-TRANSLATION TAGGING COMPLEX"/>
    <property type="match status" value="1"/>
</dbReference>
<dbReference type="Pfam" id="PF01668">
    <property type="entry name" value="SmpB"/>
    <property type="match status" value="1"/>
</dbReference>
<dbReference type="SUPFAM" id="SSF74982">
    <property type="entry name" value="Small protein B (SmpB)"/>
    <property type="match status" value="1"/>
</dbReference>
<dbReference type="PROSITE" id="PS01317">
    <property type="entry name" value="SSRP"/>
    <property type="match status" value="1"/>
</dbReference>
<reference key="1">
    <citation type="journal article" date="2006" name="J. Bacteriol.">
        <title>Chromosome rearrangement and diversification of Francisella tularensis revealed by the type B (OSU18) genome sequence.</title>
        <authorList>
            <person name="Petrosino J.F."/>
            <person name="Xiang Q."/>
            <person name="Karpathy S.E."/>
            <person name="Jiang H."/>
            <person name="Yerrapragada S."/>
            <person name="Liu Y."/>
            <person name="Gioia J."/>
            <person name="Hemphill L."/>
            <person name="Gonzalez A."/>
            <person name="Raghavan T.M."/>
            <person name="Uzman A."/>
            <person name="Fox G.E."/>
            <person name="Highlander S."/>
            <person name="Reichard M."/>
            <person name="Morton R.J."/>
            <person name="Clinkenbeard K.D."/>
            <person name="Weinstock G.M."/>
        </authorList>
    </citation>
    <scope>NUCLEOTIDE SEQUENCE [LARGE SCALE GENOMIC DNA]</scope>
    <source>
        <strain>OSU18</strain>
    </source>
</reference>
<name>SSRP_FRATO</name>
<keyword id="KW-0963">Cytoplasm</keyword>
<keyword id="KW-0694">RNA-binding</keyword>
<sequence length="157" mass="17954">MSKHKVSPATIAKNKKALHDYTILEKFEAGIVLQGWEVKSIRAGKVQMVDSHVHIKHGEAWLFNCLITPLLSASTHVVADAAATRKLLLNRREINKIMGRIEQKGFTCIPLSMYWKGPRVKVEIALAQGKKVHDKRQAQKDKDWAREKDRLFKKAYK</sequence>
<comment type="function">
    <text evidence="1">Required for rescue of stalled ribosomes mediated by trans-translation. Binds to transfer-messenger RNA (tmRNA), required for stable association of tmRNA with ribosomes. tmRNA and SmpB together mimic tRNA shape, replacing the anticodon stem-loop with SmpB. tmRNA is encoded by the ssrA gene; the 2 termini fold to resemble tRNA(Ala) and it encodes a 'tag peptide', a short internal open reading frame. During trans-translation Ala-aminoacylated tmRNA acts like a tRNA, entering the A-site of stalled ribosomes, displacing the stalled mRNA. The ribosome then switches to translate the ORF on the tmRNA; the nascent peptide is terminated with the 'tag peptide' encoded by the tmRNA and targeted for degradation. The ribosome is freed to recommence translation, which seems to be the essential function of trans-translation.</text>
</comment>
<comment type="subcellular location">
    <subcellularLocation>
        <location evidence="1">Cytoplasm</location>
    </subcellularLocation>
    <text evidence="1">The tmRNA-SmpB complex associates with stalled 70S ribosomes.</text>
</comment>
<comment type="similarity">
    <text evidence="1">Belongs to the SmpB family.</text>
</comment>
<evidence type="ECO:0000255" key="1">
    <source>
        <dbReference type="HAMAP-Rule" id="MF_00023"/>
    </source>
</evidence>
<evidence type="ECO:0000256" key="2">
    <source>
        <dbReference type="SAM" id="MobiDB-lite"/>
    </source>
</evidence>